<keyword id="KW-0929">Antimicrobial</keyword>
<keyword id="KW-1015">Disulfide bond</keyword>
<keyword id="KW-0295">Fungicide</keyword>
<keyword id="KW-0611">Plant defense</keyword>
<keyword id="KW-1185">Reference proteome</keyword>
<keyword id="KW-0964">Secreted</keyword>
<keyword id="KW-0732">Signal</keyword>
<gene>
    <name type="primary">PDF3.2</name>
    <name type="synonym">LCR59</name>
    <name type="ordered locus">At4g30070</name>
    <name type="ORF">F6G3.100</name>
</gene>
<proteinExistence type="evidence at transcript level"/>
<name>DF182_ARATH</name>
<dbReference type="EMBL" id="AL078464">
    <property type="status" value="NOT_ANNOTATED_CDS"/>
    <property type="molecule type" value="Genomic_DNA"/>
</dbReference>
<dbReference type="EMBL" id="AL161576">
    <property type="status" value="NOT_ANNOTATED_CDS"/>
    <property type="molecule type" value="Genomic_DNA"/>
</dbReference>
<dbReference type="EMBL" id="CP002687">
    <property type="protein sequence ID" value="AEE85716.1"/>
    <property type="molecule type" value="Genomic_DNA"/>
</dbReference>
<dbReference type="EMBL" id="DQ446884">
    <property type="protein sequence ID" value="ABE66103.1"/>
    <property type="molecule type" value="mRNA"/>
</dbReference>
<dbReference type="EMBL" id="DQ653236">
    <property type="protein sequence ID" value="ABK28659.1"/>
    <property type="status" value="ALT_SEQ"/>
    <property type="molecule type" value="mRNA"/>
</dbReference>
<dbReference type="EMBL" id="AY803271">
    <property type="protein sequence ID" value="AAX39312.1"/>
    <property type="molecule type" value="mRNA"/>
</dbReference>
<dbReference type="RefSeq" id="NP_567840.1">
    <property type="nucleotide sequence ID" value="NM_119153.2"/>
</dbReference>
<dbReference type="STRING" id="3702.P82773"/>
<dbReference type="PaxDb" id="3702-AT4G30070.1"/>
<dbReference type="ProteomicsDB" id="224242"/>
<dbReference type="EnsemblPlants" id="AT4G30070.1">
    <property type="protein sequence ID" value="AT4G30070.1"/>
    <property type="gene ID" value="AT4G30070"/>
</dbReference>
<dbReference type="GeneID" id="829130"/>
<dbReference type="Gramene" id="AT4G30070.1">
    <property type="protein sequence ID" value="AT4G30070.1"/>
    <property type="gene ID" value="AT4G30070"/>
</dbReference>
<dbReference type="KEGG" id="ath:AT4G30070"/>
<dbReference type="Araport" id="AT4G30070"/>
<dbReference type="TAIR" id="AT4G30070">
    <property type="gene designation" value="LCR59"/>
</dbReference>
<dbReference type="eggNOG" id="ENOG502SD1Z">
    <property type="taxonomic scope" value="Eukaryota"/>
</dbReference>
<dbReference type="HOGENOM" id="CLU_158287_1_1_1"/>
<dbReference type="InParanoid" id="P82773"/>
<dbReference type="OMA" id="NCDERCK"/>
<dbReference type="OrthoDB" id="993238at2759"/>
<dbReference type="PhylomeDB" id="P82773"/>
<dbReference type="PRO" id="PR:P82773"/>
<dbReference type="Proteomes" id="UP000006548">
    <property type="component" value="Chromosome 4"/>
</dbReference>
<dbReference type="ExpressionAtlas" id="P82773">
    <property type="expression patterns" value="baseline and differential"/>
</dbReference>
<dbReference type="GO" id="GO:0005576">
    <property type="term" value="C:extracellular region"/>
    <property type="evidence" value="ECO:0007669"/>
    <property type="project" value="UniProtKB-SubCell"/>
</dbReference>
<dbReference type="GO" id="GO:0006952">
    <property type="term" value="P:defense response"/>
    <property type="evidence" value="ECO:0000250"/>
    <property type="project" value="TAIR"/>
</dbReference>
<dbReference type="GO" id="GO:0050832">
    <property type="term" value="P:defense response to fungus"/>
    <property type="evidence" value="ECO:0007669"/>
    <property type="project" value="UniProtKB-KW"/>
</dbReference>
<dbReference type="GO" id="GO:0031640">
    <property type="term" value="P:killing of cells of another organism"/>
    <property type="evidence" value="ECO:0007669"/>
    <property type="project" value="UniProtKB-KW"/>
</dbReference>
<dbReference type="InterPro" id="IPR039641">
    <property type="entry name" value="LCR"/>
</dbReference>
<dbReference type="PANTHER" id="PTHR36788:SF4">
    <property type="entry name" value="DEFENSIN-LIKE PROTEIN 181-RELATED"/>
    <property type="match status" value="1"/>
</dbReference>
<dbReference type="PANTHER" id="PTHR36788">
    <property type="entry name" value="DEFENSIN-LIKE PROTEIN 183"/>
    <property type="match status" value="1"/>
</dbReference>
<feature type="signal peptide" evidence="2">
    <location>
        <begin position="1"/>
        <end position="26"/>
    </location>
</feature>
<feature type="chain" id="PRO_0000017297" description="Defensin-like protein 182">
    <location>
        <begin position="27"/>
        <end position="129"/>
    </location>
</feature>
<feature type="disulfide bond" evidence="1">
    <location>
        <begin position="29"/>
        <end position="70"/>
    </location>
</feature>
<feature type="disulfide bond" evidence="1">
    <location>
        <begin position="36"/>
        <end position="55"/>
    </location>
</feature>
<feature type="disulfide bond" evidence="1">
    <location>
        <begin position="39"/>
        <end position="64"/>
    </location>
</feature>
<feature type="disulfide bond" evidence="1">
    <location>
        <begin position="43"/>
        <end position="66"/>
    </location>
</feature>
<feature type="disulfide bond" evidence="1">
    <location>
        <begin position="83"/>
        <end position="129"/>
    </location>
</feature>
<feature type="disulfide bond" evidence="1">
    <location>
        <begin position="94"/>
        <end position="114"/>
    </location>
</feature>
<feature type="disulfide bond" evidence="1">
    <location>
        <begin position="99"/>
        <end position="123"/>
    </location>
</feature>
<feature type="disulfide bond" evidence="1">
    <location>
        <begin position="103"/>
        <end position="125"/>
    </location>
</feature>
<protein>
    <recommendedName>
        <fullName>Defensin-like protein 182</fullName>
    </recommendedName>
    <alternativeName>
        <fullName>Low-molecular-weight cysteine-rich protein 59</fullName>
        <shortName>Protein LCR59</shortName>
    </alternativeName>
    <alternativeName>
        <fullName>Plant defensin 3.2</fullName>
    </alternativeName>
</protein>
<comment type="function">
    <text>Confers broad-spectrum resistance to pathogens.</text>
</comment>
<comment type="subcellular location">
    <subcellularLocation>
        <location evidence="1">Secreted</location>
    </subcellularLocation>
</comment>
<comment type="similarity">
    <text evidence="3">Belongs to the DEFL family.</text>
</comment>
<comment type="caution">
    <text evidence="3">Contains 8 disulfide bonds instead of the 4 disulfide bonds, which are conserved features of the family.</text>
</comment>
<comment type="sequence caution" evidence="3">
    <conflict type="erroneous termination">
        <sequence resource="EMBL-CDS" id="ABK28659"/>
    </conflict>
    <text>Extended C-terminus.</text>
</comment>
<evidence type="ECO:0000250" key="1"/>
<evidence type="ECO:0000255" key="2"/>
<evidence type="ECO:0000305" key="3"/>
<accession>P82773</accession>
<accession>A0MFB0</accession>
<accession>Q1PE34</accession>
<accession>Q4VNZ1</accession>
<reference evidence="3" key="1">
    <citation type="journal article" date="1999" name="Nature">
        <title>Sequence and analysis of chromosome 4 of the plant Arabidopsis thaliana.</title>
        <authorList>
            <person name="Mayer K.F.X."/>
            <person name="Schueller C."/>
            <person name="Wambutt R."/>
            <person name="Murphy G."/>
            <person name="Volckaert G."/>
            <person name="Pohl T."/>
            <person name="Duesterhoeft A."/>
            <person name="Stiekema W."/>
            <person name="Entian K.-D."/>
            <person name="Terryn N."/>
            <person name="Harris B."/>
            <person name="Ansorge W."/>
            <person name="Brandt P."/>
            <person name="Grivell L.A."/>
            <person name="Rieger M."/>
            <person name="Weichselgartner M."/>
            <person name="de Simone V."/>
            <person name="Obermaier B."/>
            <person name="Mache R."/>
            <person name="Mueller M."/>
            <person name="Kreis M."/>
            <person name="Delseny M."/>
            <person name="Puigdomenech P."/>
            <person name="Watson M."/>
            <person name="Schmidtheini T."/>
            <person name="Reichert B."/>
            <person name="Portetelle D."/>
            <person name="Perez-Alonso M."/>
            <person name="Boutry M."/>
            <person name="Bancroft I."/>
            <person name="Vos P."/>
            <person name="Hoheisel J."/>
            <person name="Zimmermann W."/>
            <person name="Wedler H."/>
            <person name="Ridley P."/>
            <person name="Langham S.-A."/>
            <person name="McCullagh B."/>
            <person name="Bilham L."/>
            <person name="Robben J."/>
            <person name="van der Schueren J."/>
            <person name="Grymonprez B."/>
            <person name="Chuang Y.-J."/>
            <person name="Vandenbussche F."/>
            <person name="Braeken M."/>
            <person name="Weltjens I."/>
            <person name="Voet M."/>
            <person name="Bastiaens I."/>
            <person name="Aert R."/>
            <person name="Defoor E."/>
            <person name="Weitzenegger T."/>
            <person name="Bothe G."/>
            <person name="Ramsperger U."/>
            <person name="Hilbert H."/>
            <person name="Braun M."/>
            <person name="Holzer E."/>
            <person name="Brandt A."/>
            <person name="Peters S."/>
            <person name="van Staveren M."/>
            <person name="Dirkse W."/>
            <person name="Mooijman P."/>
            <person name="Klein Lankhorst R."/>
            <person name="Rose M."/>
            <person name="Hauf J."/>
            <person name="Koetter P."/>
            <person name="Berneiser S."/>
            <person name="Hempel S."/>
            <person name="Feldpausch M."/>
            <person name="Lamberth S."/>
            <person name="Van den Daele H."/>
            <person name="De Keyser A."/>
            <person name="Buysshaert C."/>
            <person name="Gielen J."/>
            <person name="Villarroel R."/>
            <person name="De Clercq R."/>
            <person name="van Montagu M."/>
            <person name="Rogers J."/>
            <person name="Cronin A."/>
            <person name="Quail M.A."/>
            <person name="Bray-Allen S."/>
            <person name="Clark L."/>
            <person name="Doggett J."/>
            <person name="Hall S."/>
            <person name="Kay M."/>
            <person name="Lennard N."/>
            <person name="McLay K."/>
            <person name="Mayes R."/>
            <person name="Pettett A."/>
            <person name="Rajandream M.A."/>
            <person name="Lyne M."/>
            <person name="Benes V."/>
            <person name="Rechmann S."/>
            <person name="Borkova D."/>
            <person name="Bloecker H."/>
            <person name="Scharfe M."/>
            <person name="Grimm M."/>
            <person name="Loehnert T.-H."/>
            <person name="Dose S."/>
            <person name="de Haan M."/>
            <person name="Maarse A.C."/>
            <person name="Schaefer M."/>
            <person name="Mueller-Auer S."/>
            <person name="Gabel C."/>
            <person name="Fuchs M."/>
            <person name="Fartmann B."/>
            <person name="Granderath K."/>
            <person name="Dauner D."/>
            <person name="Herzl A."/>
            <person name="Neumann S."/>
            <person name="Argiriou A."/>
            <person name="Vitale D."/>
            <person name="Liguori R."/>
            <person name="Piravandi E."/>
            <person name="Massenet O."/>
            <person name="Quigley F."/>
            <person name="Clabauld G."/>
            <person name="Muendlein A."/>
            <person name="Felber R."/>
            <person name="Schnabl S."/>
            <person name="Hiller R."/>
            <person name="Schmidt W."/>
            <person name="Lecharny A."/>
            <person name="Aubourg S."/>
            <person name="Chefdor F."/>
            <person name="Cooke R."/>
            <person name="Berger C."/>
            <person name="Monfort A."/>
            <person name="Casacuberta E."/>
            <person name="Gibbons T."/>
            <person name="Weber N."/>
            <person name="Vandenbol M."/>
            <person name="Bargues M."/>
            <person name="Terol J."/>
            <person name="Torres A."/>
            <person name="Perez-Perez A."/>
            <person name="Purnelle B."/>
            <person name="Bent E."/>
            <person name="Johnson S."/>
            <person name="Tacon D."/>
            <person name="Jesse T."/>
            <person name="Heijnen L."/>
            <person name="Schwarz S."/>
            <person name="Scholler P."/>
            <person name="Heber S."/>
            <person name="Francs P."/>
            <person name="Bielke C."/>
            <person name="Frishman D."/>
            <person name="Haase D."/>
            <person name="Lemcke K."/>
            <person name="Mewes H.-W."/>
            <person name="Stocker S."/>
            <person name="Zaccaria P."/>
            <person name="Bevan M."/>
            <person name="Wilson R.K."/>
            <person name="de la Bastide M."/>
            <person name="Habermann K."/>
            <person name="Parnell L."/>
            <person name="Dedhia N."/>
            <person name="Gnoj L."/>
            <person name="Schutz K."/>
            <person name="Huang E."/>
            <person name="Spiegel L."/>
            <person name="Sekhon M."/>
            <person name="Murray J."/>
            <person name="Sheet P."/>
            <person name="Cordes M."/>
            <person name="Abu-Threideh J."/>
            <person name="Stoneking T."/>
            <person name="Kalicki J."/>
            <person name="Graves T."/>
            <person name="Harmon G."/>
            <person name="Edwards J."/>
            <person name="Latreille P."/>
            <person name="Courtney L."/>
            <person name="Cloud J."/>
            <person name="Abbott A."/>
            <person name="Scott K."/>
            <person name="Johnson D."/>
            <person name="Minx P."/>
            <person name="Bentley D."/>
            <person name="Fulton B."/>
            <person name="Miller N."/>
            <person name="Greco T."/>
            <person name="Kemp K."/>
            <person name="Kramer J."/>
            <person name="Fulton L."/>
            <person name="Mardis E."/>
            <person name="Dante M."/>
            <person name="Pepin K."/>
            <person name="Hillier L.W."/>
            <person name="Nelson J."/>
            <person name="Spieth J."/>
            <person name="Ryan E."/>
            <person name="Andrews S."/>
            <person name="Geisel C."/>
            <person name="Layman D."/>
            <person name="Du H."/>
            <person name="Ali J."/>
            <person name="Berghoff A."/>
            <person name="Jones K."/>
            <person name="Drone K."/>
            <person name="Cotton M."/>
            <person name="Joshu C."/>
            <person name="Antonoiu B."/>
            <person name="Zidanic M."/>
            <person name="Strong C."/>
            <person name="Sun H."/>
            <person name="Lamar B."/>
            <person name="Yordan C."/>
            <person name="Ma P."/>
            <person name="Zhong J."/>
            <person name="Preston R."/>
            <person name="Vil D."/>
            <person name="Shekher M."/>
            <person name="Matero A."/>
            <person name="Shah R."/>
            <person name="Swaby I.K."/>
            <person name="O'Shaughnessy A."/>
            <person name="Rodriguez M."/>
            <person name="Hoffman J."/>
            <person name="Till S."/>
            <person name="Granat S."/>
            <person name="Shohdy N."/>
            <person name="Hasegawa A."/>
            <person name="Hameed A."/>
            <person name="Lodhi M."/>
            <person name="Johnson A."/>
            <person name="Chen E."/>
            <person name="Marra M.A."/>
            <person name="Martienssen R."/>
            <person name="McCombie W.R."/>
        </authorList>
    </citation>
    <scope>NUCLEOTIDE SEQUENCE [LARGE SCALE GENOMIC DNA]</scope>
    <source>
        <strain>cv. Columbia</strain>
    </source>
</reference>
<reference key="2">
    <citation type="journal article" date="2017" name="Plant J.">
        <title>Araport11: a complete reannotation of the Arabidopsis thaliana reference genome.</title>
        <authorList>
            <person name="Cheng C.Y."/>
            <person name="Krishnakumar V."/>
            <person name="Chan A.P."/>
            <person name="Thibaud-Nissen F."/>
            <person name="Schobel S."/>
            <person name="Town C.D."/>
        </authorList>
    </citation>
    <scope>GENOME REANNOTATION</scope>
    <source>
        <strain>cv. Columbia</strain>
    </source>
</reference>
<reference key="3">
    <citation type="journal article" date="2006" name="Plant Biotechnol. J.">
        <title>Simultaneous high-throughput recombinational cloning of open reading frames in closed and open configurations.</title>
        <authorList>
            <person name="Underwood B.A."/>
            <person name="Vanderhaeghen R."/>
            <person name="Whitford R."/>
            <person name="Town C.D."/>
            <person name="Hilson P."/>
        </authorList>
    </citation>
    <scope>NUCLEOTIDE SEQUENCE [LARGE SCALE MRNA]</scope>
    <source>
        <strain>cv. Columbia</strain>
    </source>
</reference>
<reference key="4">
    <citation type="journal article" date="2005" name="Plant Physiol.">
        <title>Genome organization of more than 300 defensin-like genes in Arabidopsis.</title>
        <authorList>
            <person name="Silverstein K.A.T."/>
            <person name="Graham M.A."/>
            <person name="Paape T.D."/>
            <person name="VandenBosch K.A."/>
        </authorList>
    </citation>
    <scope>NUCLEOTIDE SEQUENCE [MRNA] OF 39-107</scope>
    <scope>GENE FAMILY</scope>
</reference>
<reference evidence="3" key="5">
    <citation type="journal article" date="2001" name="Plant Mol. Biol.">
        <title>Two large Arabidopsis thaliana gene families are homologous to the Brassica gene superfamily that encodes pollen coat proteins and the male component of the self-incompatibility response.</title>
        <authorList>
            <person name="Vanoosthuyse V."/>
            <person name="Miege C."/>
            <person name="Dumas C."/>
            <person name="Cock J.M."/>
        </authorList>
    </citation>
    <scope>IDENTIFICATION</scope>
</reference>
<reference key="6">
    <citation type="journal article" date="2002" name="Planta">
        <title>Plant defensins.</title>
        <authorList>
            <person name="Thomma B.P.H.J."/>
            <person name="Cammue B.P."/>
            <person name="Thevissen K."/>
        </authorList>
    </citation>
    <scope>GENE FAMILY</scope>
    <scope>NOMENCLATURE</scope>
</reference>
<organism evidence="3">
    <name type="scientific">Arabidopsis thaliana</name>
    <name type="common">Mouse-ear cress</name>
    <dbReference type="NCBI Taxonomy" id="3702"/>
    <lineage>
        <taxon>Eukaryota</taxon>
        <taxon>Viridiplantae</taxon>
        <taxon>Streptophyta</taxon>
        <taxon>Embryophyta</taxon>
        <taxon>Tracheophyta</taxon>
        <taxon>Spermatophyta</taxon>
        <taxon>Magnoliopsida</taxon>
        <taxon>eudicotyledons</taxon>
        <taxon>Gunneridae</taxon>
        <taxon>Pentapetalae</taxon>
        <taxon>rosids</taxon>
        <taxon>malvids</taxon>
        <taxon>Brassicales</taxon>
        <taxon>Brassicaceae</taxon>
        <taxon>Camelineae</taxon>
        <taxon>Arabidopsis</taxon>
    </lineage>
</organism>
<sequence>METVTSLVFIVNLLIIFTSVVNQARGDTCIDGLGYCNNCDERCKAKHGPSSESSCDRSVGVPLCKCYYECESPPSPPAPPKKCDGGAGICSQRCQGQCCDMNCAQKYIGGHGFCNTLGTFSFCQCEYPC</sequence>